<name>EFNB3_HUMAN</name>
<proteinExistence type="evidence at protein level"/>
<reference key="1">
    <citation type="submission" date="1996-07" db="EMBL/GenBank/DDBJ databases">
        <authorList>
            <person name="Cerretti D.P."/>
        </authorList>
    </citation>
    <scope>NUCLEOTIDE SEQUENCE [MRNA]</scope>
</reference>
<reference key="2">
    <citation type="journal article" date="1997" name="Genomics">
        <title>cDNA cloning, chromosomal localization, and expression pattern of EPLG8, a new member of the EPLG gene family encoding ligands of EPH-related protein-tyrosine kinase receptors.</title>
        <authorList>
            <person name="Tang X.X."/>
            <person name="Pleasure D.E."/>
            <person name="Ikegaki N."/>
        </authorList>
    </citation>
    <scope>NUCLEOTIDE SEQUENCE [MRNA]</scope>
    <source>
        <tissue>Brain</tissue>
    </source>
</reference>
<reference key="3">
    <citation type="journal article" date="1996" name="Oncogene">
        <title>Elk-L3, a novel transmembrane ligand for the Eph family of receptor tyrosine kinases, expressed in embryonic floor plate, roof plate and hindbrain segments.</title>
        <authorList>
            <person name="Gale N.W."/>
            <person name="Flenniken A."/>
            <person name="Compton D.C."/>
            <person name="Jenkins N.A."/>
            <person name="Copeland N.G."/>
            <person name="Gilbert D.J."/>
            <person name="Davis S."/>
            <person name="Wilkinson D.G."/>
            <person name="Yancopoulos G.D."/>
        </authorList>
    </citation>
    <scope>NUCLEOTIDE SEQUENCE [MRNA]</scope>
    <source>
        <tissue>Brain cortex</tissue>
    </source>
</reference>
<reference key="4">
    <citation type="journal article" date="2004" name="Nat. Genet.">
        <title>Complete sequencing and characterization of 21,243 full-length human cDNAs.</title>
        <authorList>
            <person name="Ota T."/>
            <person name="Suzuki Y."/>
            <person name="Nishikawa T."/>
            <person name="Otsuki T."/>
            <person name="Sugiyama T."/>
            <person name="Irie R."/>
            <person name="Wakamatsu A."/>
            <person name="Hayashi K."/>
            <person name="Sato H."/>
            <person name="Nagai K."/>
            <person name="Kimura K."/>
            <person name="Makita H."/>
            <person name="Sekine M."/>
            <person name="Obayashi M."/>
            <person name="Nishi T."/>
            <person name="Shibahara T."/>
            <person name="Tanaka T."/>
            <person name="Ishii S."/>
            <person name="Yamamoto J."/>
            <person name="Saito K."/>
            <person name="Kawai Y."/>
            <person name="Isono Y."/>
            <person name="Nakamura Y."/>
            <person name="Nagahari K."/>
            <person name="Murakami K."/>
            <person name="Yasuda T."/>
            <person name="Iwayanagi T."/>
            <person name="Wagatsuma M."/>
            <person name="Shiratori A."/>
            <person name="Sudo H."/>
            <person name="Hosoiri T."/>
            <person name="Kaku Y."/>
            <person name="Kodaira H."/>
            <person name="Kondo H."/>
            <person name="Sugawara M."/>
            <person name="Takahashi M."/>
            <person name="Kanda K."/>
            <person name="Yokoi T."/>
            <person name="Furuya T."/>
            <person name="Kikkawa E."/>
            <person name="Omura Y."/>
            <person name="Abe K."/>
            <person name="Kamihara K."/>
            <person name="Katsuta N."/>
            <person name="Sato K."/>
            <person name="Tanikawa M."/>
            <person name="Yamazaki M."/>
            <person name="Ninomiya K."/>
            <person name="Ishibashi T."/>
            <person name="Yamashita H."/>
            <person name="Murakawa K."/>
            <person name="Fujimori K."/>
            <person name="Tanai H."/>
            <person name="Kimata M."/>
            <person name="Watanabe M."/>
            <person name="Hiraoka S."/>
            <person name="Chiba Y."/>
            <person name="Ishida S."/>
            <person name="Ono Y."/>
            <person name="Takiguchi S."/>
            <person name="Watanabe S."/>
            <person name="Yosida M."/>
            <person name="Hotuta T."/>
            <person name="Kusano J."/>
            <person name="Kanehori K."/>
            <person name="Takahashi-Fujii A."/>
            <person name="Hara H."/>
            <person name="Tanase T.-O."/>
            <person name="Nomura Y."/>
            <person name="Togiya S."/>
            <person name="Komai F."/>
            <person name="Hara R."/>
            <person name="Takeuchi K."/>
            <person name="Arita M."/>
            <person name="Imose N."/>
            <person name="Musashino K."/>
            <person name="Yuuki H."/>
            <person name="Oshima A."/>
            <person name="Sasaki N."/>
            <person name="Aotsuka S."/>
            <person name="Yoshikawa Y."/>
            <person name="Matsunawa H."/>
            <person name="Ichihara T."/>
            <person name="Shiohata N."/>
            <person name="Sano S."/>
            <person name="Moriya S."/>
            <person name="Momiyama H."/>
            <person name="Satoh N."/>
            <person name="Takami S."/>
            <person name="Terashima Y."/>
            <person name="Suzuki O."/>
            <person name="Nakagawa S."/>
            <person name="Senoh A."/>
            <person name="Mizoguchi H."/>
            <person name="Goto Y."/>
            <person name="Shimizu F."/>
            <person name="Wakebe H."/>
            <person name="Hishigaki H."/>
            <person name="Watanabe T."/>
            <person name="Sugiyama A."/>
            <person name="Takemoto M."/>
            <person name="Kawakami B."/>
            <person name="Yamazaki M."/>
            <person name="Watanabe K."/>
            <person name="Kumagai A."/>
            <person name="Itakura S."/>
            <person name="Fukuzumi Y."/>
            <person name="Fujimori Y."/>
            <person name="Komiyama M."/>
            <person name="Tashiro H."/>
            <person name="Tanigami A."/>
            <person name="Fujiwara T."/>
            <person name="Ono T."/>
            <person name="Yamada K."/>
            <person name="Fujii Y."/>
            <person name="Ozaki K."/>
            <person name="Hirao M."/>
            <person name="Ohmori Y."/>
            <person name="Kawabata A."/>
            <person name="Hikiji T."/>
            <person name="Kobatake N."/>
            <person name="Inagaki H."/>
            <person name="Ikema Y."/>
            <person name="Okamoto S."/>
            <person name="Okitani R."/>
            <person name="Kawakami T."/>
            <person name="Noguchi S."/>
            <person name="Itoh T."/>
            <person name="Shigeta K."/>
            <person name="Senba T."/>
            <person name="Matsumura K."/>
            <person name="Nakajima Y."/>
            <person name="Mizuno T."/>
            <person name="Morinaga M."/>
            <person name="Sasaki M."/>
            <person name="Togashi T."/>
            <person name="Oyama M."/>
            <person name="Hata H."/>
            <person name="Watanabe M."/>
            <person name="Komatsu T."/>
            <person name="Mizushima-Sugano J."/>
            <person name="Satoh T."/>
            <person name="Shirai Y."/>
            <person name="Takahashi Y."/>
            <person name="Nakagawa K."/>
            <person name="Okumura K."/>
            <person name="Nagase T."/>
            <person name="Nomura N."/>
            <person name="Kikuchi H."/>
            <person name="Masuho Y."/>
            <person name="Yamashita R."/>
            <person name="Nakai K."/>
            <person name="Yada T."/>
            <person name="Nakamura Y."/>
            <person name="Ohara O."/>
            <person name="Isogai T."/>
            <person name="Sugano S."/>
        </authorList>
    </citation>
    <scope>NUCLEOTIDE SEQUENCE [LARGE SCALE MRNA]</scope>
    <source>
        <tissue>Testis</tissue>
    </source>
</reference>
<reference key="5">
    <citation type="submission" date="2005-09" db="EMBL/GenBank/DDBJ databases">
        <authorList>
            <person name="Mural R.J."/>
            <person name="Istrail S."/>
            <person name="Sutton G.G."/>
            <person name="Florea L."/>
            <person name="Halpern A.L."/>
            <person name="Mobarry C.M."/>
            <person name="Lippert R."/>
            <person name="Walenz B."/>
            <person name="Shatkay H."/>
            <person name="Dew I."/>
            <person name="Miller J.R."/>
            <person name="Flanigan M.J."/>
            <person name="Edwards N.J."/>
            <person name="Bolanos R."/>
            <person name="Fasulo D."/>
            <person name="Halldorsson B.V."/>
            <person name="Hannenhalli S."/>
            <person name="Turner R."/>
            <person name="Yooseph S."/>
            <person name="Lu F."/>
            <person name="Nusskern D.R."/>
            <person name="Shue B.C."/>
            <person name="Zheng X.H."/>
            <person name="Zhong F."/>
            <person name="Delcher A.L."/>
            <person name="Huson D.H."/>
            <person name="Kravitz S.A."/>
            <person name="Mouchard L."/>
            <person name="Reinert K."/>
            <person name="Remington K.A."/>
            <person name="Clark A.G."/>
            <person name="Waterman M.S."/>
            <person name="Eichler E.E."/>
            <person name="Adams M.D."/>
            <person name="Hunkapiller M.W."/>
            <person name="Myers E.W."/>
            <person name="Venter J.C."/>
        </authorList>
    </citation>
    <scope>NUCLEOTIDE SEQUENCE [LARGE SCALE GENOMIC DNA]</scope>
</reference>
<reference key="6">
    <citation type="journal article" date="2004" name="Genome Res.">
        <title>The status, quality, and expansion of the NIH full-length cDNA project: the Mammalian Gene Collection (MGC).</title>
        <authorList>
            <consortium name="The MGC Project Team"/>
        </authorList>
    </citation>
    <scope>NUCLEOTIDE SEQUENCE [LARGE SCALE MRNA]</scope>
    <source>
        <tissue>Brain</tissue>
    </source>
</reference>
<reference key="7">
    <citation type="journal article" date="2004" name="Protein Sci.">
        <title>Signal peptide prediction based on analysis of experimentally verified cleavage sites.</title>
        <authorList>
            <person name="Zhang Z."/>
            <person name="Henzel W.J."/>
        </authorList>
    </citation>
    <scope>PROTEIN SEQUENCE OF 28-42</scope>
</reference>
<reference key="8">
    <citation type="journal article" date="1999" name="Neuron">
        <title>EphrinB ligands recruit GRIP family PDZ adaptor proteins into raft membrane microdomains.</title>
        <authorList>
            <person name="Brueckner K."/>
            <person name="Pablo Labrador J."/>
            <person name="Scheiffele P."/>
            <person name="Herb A."/>
            <person name="Seeburg P.H."/>
            <person name="Klein R."/>
        </authorList>
    </citation>
    <scope>INTERACTION WITH GRIP1 AND GRIP2</scope>
    <source>
        <tissue>Fetal brain</tissue>
    </source>
</reference>
<reference key="9">
    <citation type="journal article" date="2006" name="PLoS Pathog.">
        <title>Two key residues in ephrinB3 are critical for its use as an alternative receptor for Nipah virus.</title>
        <authorList>
            <person name="Negrete O.A."/>
            <person name="Wolf M.C."/>
            <person name="Aguilar H.C."/>
            <person name="Enterlein S."/>
            <person name="Wang W."/>
            <person name="Muehlberger E."/>
            <person name="Su S.V."/>
            <person name="Bertolotti-Ciarlet A."/>
            <person name="Flick R."/>
            <person name="Lee B."/>
        </authorList>
    </citation>
    <scope>FUNCTION (MICROBIAL INFECTION)</scope>
    <scope>INTERACTION WITH NIPAH VIRUS PROTEIN G</scope>
    <scope>MUTAGENESIS OF 124-LEU-TRP-125</scope>
</reference>
<reference key="10">
    <citation type="journal article" date="2007" name="J. Virol.">
        <title>Identification of Hendra virus G glycoprotein residues that are critical for receptor binding.</title>
        <authorList>
            <person name="Bishop K.A."/>
            <person name="Stantchev T.S."/>
            <person name="Hickey A.C."/>
            <person name="Khetawat D."/>
            <person name="Bossart K.N."/>
            <person name="Krasnoperov V."/>
            <person name="Gill P."/>
            <person name="Feng Y.R."/>
            <person name="Wang L."/>
            <person name="Eaton B.T."/>
            <person name="Wang L.F."/>
            <person name="Broder C.C."/>
        </authorList>
    </citation>
    <scope>FUNCTION (MICROBIAL INFECTION)</scope>
    <scope>INTERACTION WITH HENDRA VIRUS GLYCOPROTEIN</scope>
</reference>
<reference key="11">
    <citation type="journal article" date="2014" name="J. Proteomics">
        <title>An enzyme assisted RP-RPLC approach for in-depth analysis of human liver phosphoproteome.</title>
        <authorList>
            <person name="Bian Y."/>
            <person name="Song C."/>
            <person name="Cheng K."/>
            <person name="Dong M."/>
            <person name="Wang F."/>
            <person name="Huang J."/>
            <person name="Sun D."/>
            <person name="Wang L."/>
            <person name="Ye M."/>
            <person name="Zou H."/>
        </authorList>
    </citation>
    <scope>PHOSPHORYLATION [LARGE SCALE ANALYSIS] AT SER-274</scope>
    <scope>IDENTIFICATION BY MASS SPECTROMETRY [LARGE SCALE ANALYSIS]</scope>
    <source>
        <tissue>Liver</tissue>
    </source>
</reference>
<evidence type="ECO:0000250" key="1"/>
<evidence type="ECO:0000250" key="2">
    <source>
        <dbReference type="UniProtKB" id="O35393"/>
    </source>
</evidence>
<evidence type="ECO:0000255" key="3"/>
<evidence type="ECO:0000255" key="4">
    <source>
        <dbReference type="PROSITE-ProRule" id="PRU00884"/>
    </source>
</evidence>
<evidence type="ECO:0000256" key="5">
    <source>
        <dbReference type="SAM" id="MobiDB-lite"/>
    </source>
</evidence>
<evidence type="ECO:0000269" key="6">
    <source>
    </source>
</evidence>
<evidence type="ECO:0000269" key="7">
    <source>
    </source>
</evidence>
<evidence type="ECO:0000269" key="8">
    <source>
    </source>
</evidence>
<evidence type="ECO:0000269" key="9">
    <source>
    </source>
</evidence>
<evidence type="ECO:0007744" key="10">
    <source>
    </source>
</evidence>
<sequence>MGPPHSGPGGVRVGALLLLGVLGLVSGLSLEPVYWNSANKRFQAEGGYVLYPQIGDRLDLLCPRARPPGPHSSPNYEFYKLYLVGGAQGRRCEAPPAPNLLLTCDRPDLDLRFTIKFQEYSPNLWGHEFRSHHDYYIIATSDGTREGLESLQGGVCLTRGMKVLLRVGQSPRGGAVPRKPVSEMPMERDRGAAHSLEPGKENLPGDPTSNATSRGAEGPLPPPSMPAVAGAAGGLALLLLGVAGAGGAMCWRRRRAKPSESRHPGPGSFGRGGSLGLGGGGGMGPREAEPGELGIALRGGGAADPPFCPHYEKVSGDYGHPVYIVQDGPPQSPPNIYYKV</sequence>
<gene>
    <name type="primary">EFNB3</name>
    <name type="synonym">EPLG8</name>
    <name type="synonym">LERK8</name>
</gene>
<comment type="function">
    <text evidence="1">Cell surface transmembrane ligand for Eph receptors, a family of receptor tyrosine kinases which are crucial for migration, repulsion and adhesion during neuronal, vascular and epithelial development. Binds promiscuously Eph receptors residing on adjacent cells, leading to contact-dependent bidirectional signaling into neighboring cells. The signaling pathway downstream of the receptor is referred to as forward signaling while the signaling pathway downstream of the ephrin ligand is referred to as reverse signaling. May play a pivotal role in forebrain function. Binds to, and induce the collapse of, commissural axons/growth cones in vitro. May play a role in constraining the orientation of longitudinally projecting axons (By similarity).</text>
</comment>
<comment type="function">
    <text evidence="8 9">(Microbial infection) Acts as a receptor for nipah virus and hendra virus.</text>
</comment>
<comment type="subunit">
    <text evidence="6">Interacts with GRIP1 and GRIP2.</text>
</comment>
<comment type="subunit">
    <text evidence="8 9">(Microbial infection) Interacts with nipah virus and hendra virus glycoprotein (PubMed:16477309, PubMed:17376907).</text>
</comment>
<comment type="interaction">
    <interactant intactId="EBI-3908475">
        <id>Q15768</id>
    </interactant>
    <interactant intactId="EBI-5773557">
        <id>P54764</id>
        <label>EPHA4</label>
    </interactant>
    <organismsDiffer>false</organismsDiffer>
    <experiments>3</experiments>
</comment>
<comment type="subcellular location">
    <subcellularLocation>
        <location>Membrane</location>
        <topology>Single-pass type I membrane protein</topology>
    </subcellularLocation>
</comment>
<comment type="tissue specificity">
    <text>Highly expressed in brain; expressed in embryonic floor plate, roof plate and hindbrain segments.</text>
</comment>
<comment type="similarity">
    <text evidence="4">Belongs to the ephrin family.</text>
</comment>
<accession>Q15768</accession>
<accession>B2RBW2</accession>
<accession>D3DTQ6</accession>
<accession>O00680</accession>
<accession>Q8TBH7</accession>
<accession>Q92875</accession>
<keyword id="KW-0002">3D-structure</keyword>
<keyword id="KW-0217">Developmental protein</keyword>
<keyword id="KW-0221">Differentiation</keyword>
<keyword id="KW-0903">Direct protein sequencing</keyword>
<keyword id="KW-1015">Disulfide bond</keyword>
<keyword id="KW-0325">Glycoprotein</keyword>
<keyword id="KW-1183">Host cell receptor for virus entry</keyword>
<keyword id="KW-0945">Host-virus interaction</keyword>
<keyword id="KW-0472">Membrane</keyword>
<keyword id="KW-0488">Methylation</keyword>
<keyword id="KW-0524">Neurogenesis</keyword>
<keyword id="KW-0597">Phosphoprotein</keyword>
<keyword id="KW-1267">Proteomics identification</keyword>
<keyword id="KW-0675">Receptor</keyword>
<keyword id="KW-1185">Reference proteome</keyword>
<keyword id="KW-0732">Signal</keyword>
<keyword id="KW-0812">Transmembrane</keyword>
<keyword id="KW-1133">Transmembrane helix</keyword>
<protein>
    <recommendedName>
        <fullName>Ephrin-B3</fullName>
    </recommendedName>
    <alternativeName>
        <fullName>EPH-related receptor transmembrane ligand ELK-L3</fullName>
    </alternativeName>
    <alternativeName>
        <fullName>EPH-related receptor tyrosine kinase ligand 8</fullName>
        <shortName>LERK-8</shortName>
    </alternativeName>
</protein>
<feature type="signal peptide" evidence="7">
    <location>
        <begin position="1"/>
        <end position="27"/>
    </location>
</feature>
<feature type="chain" id="PRO_0000008395" description="Ephrin-B3">
    <location>
        <begin position="28"/>
        <end position="340"/>
    </location>
</feature>
<feature type="topological domain" description="Extracellular" evidence="3">
    <location>
        <begin position="28"/>
        <end position="226"/>
    </location>
</feature>
<feature type="transmembrane region" description="Helical" evidence="3">
    <location>
        <begin position="227"/>
        <end position="247"/>
    </location>
</feature>
<feature type="topological domain" description="Cytoplasmic" evidence="3">
    <location>
        <begin position="248"/>
        <end position="340"/>
    </location>
</feature>
<feature type="domain" description="Ephrin RBD" evidence="4">
    <location>
        <begin position="28"/>
        <end position="167"/>
    </location>
</feature>
<feature type="region of interest" description="Disordered" evidence="5">
    <location>
        <begin position="168"/>
        <end position="225"/>
    </location>
</feature>
<feature type="region of interest" description="Disordered" evidence="5">
    <location>
        <begin position="254"/>
        <end position="298"/>
    </location>
</feature>
<feature type="short sequence motif" description="PDZ-binding" evidence="3">
    <location>
        <begin position="338"/>
        <end position="340"/>
    </location>
</feature>
<feature type="compositionally biased region" description="Basic and acidic residues" evidence="5">
    <location>
        <begin position="185"/>
        <end position="200"/>
    </location>
</feature>
<feature type="compositionally biased region" description="Gly residues" evidence="5">
    <location>
        <begin position="267"/>
        <end position="284"/>
    </location>
</feature>
<feature type="modified residue" description="Omega-N-methylarginine" evidence="2">
    <location>
        <position position="271"/>
    </location>
</feature>
<feature type="modified residue" description="Phosphoserine" evidence="10">
    <location>
        <position position="274"/>
    </location>
</feature>
<feature type="glycosylation site" description="N-linked (GlcNAc...) asparagine" evidence="3">
    <location>
        <position position="210"/>
    </location>
</feature>
<feature type="disulfide bond" evidence="4">
    <location>
        <begin position="62"/>
        <end position="104"/>
    </location>
</feature>
<feature type="disulfide bond" evidence="4">
    <location>
        <begin position="92"/>
        <end position="156"/>
    </location>
</feature>
<feature type="sequence variant" id="VAR_002356" description="In dbSNP:rs1165640333.">
    <original>R</original>
    <variation>Q</variation>
    <location>
        <position position="166"/>
    </location>
</feature>
<feature type="mutagenesis site" description="Complete loss of Nipah protein G binding." evidence="8">
    <original>LW</original>
    <variation>YM</variation>
    <location>
        <begin position="124"/>
        <end position="125"/>
    </location>
</feature>
<organism>
    <name type="scientific">Homo sapiens</name>
    <name type="common">Human</name>
    <dbReference type="NCBI Taxonomy" id="9606"/>
    <lineage>
        <taxon>Eukaryota</taxon>
        <taxon>Metazoa</taxon>
        <taxon>Chordata</taxon>
        <taxon>Craniata</taxon>
        <taxon>Vertebrata</taxon>
        <taxon>Euteleostomi</taxon>
        <taxon>Mammalia</taxon>
        <taxon>Eutheria</taxon>
        <taxon>Euarchontoglires</taxon>
        <taxon>Primates</taxon>
        <taxon>Haplorrhini</taxon>
        <taxon>Catarrhini</taxon>
        <taxon>Hominidae</taxon>
        <taxon>Homo</taxon>
    </lineage>
</organism>
<dbReference type="EMBL" id="U57001">
    <property type="protein sequence ID" value="AAB05170.1"/>
    <property type="molecule type" value="mRNA"/>
</dbReference>
<dbReference type="EMBL" id="U66406">
    <property type="protein sequence ID" value="AAC51203.1"/>
    <property type="molecule type" value="mRNA"/>
</dbReference>
<dbReference type="EMBL" id="U62775">
    <property type="protein sequence ID" value="AAC50707.1"/>
    <property type="molecule type" value="mRNA"/>
</dbReference>
<dbReference type="EMBL" id="AK314841">
    <property type="protein sequence ID" value="BAG37359.1"/>
    <property type="molecule type" value="mRNA"/>
</dbReference>
<dbReference type="EMBL" id="CH471108">
    <property type="protein sequence ID" value="EAW90133.1"/>
    <property type="molecule type" value="Genomic_DNA"/>
</dbReference>
<dbReference type="EMBL" id="CH471108">
    <property type="protein sequence ID" value="EAW90135.1"/>
    <property type="molecule type" value="Genomic_DNA"/>
</dbReference>
<dbReference type="EMBL" id="BC022499">
    <property type="protein sequence ID" value="AAH22499.1"/>
    <property type="molecule type" value="mRNA"/>
</dbReference>
<dbReference type="EMBL" id="BC042944">
    <property type="protein sequence ID" value="AAH42944.1"/>
    <property type="molecule type" value="mRNA"/>
</dbReference>
<dbReference type="CCDS" id="CCDS11120.1"/>
<dbReference type="RefSeq" id="NP_001397.1">
    <property type="nucleotide sequence ID" value="NM_001406.4"/>
</dbReference>
<dbReference type="PDB" id="4BKF">
    <property type="method" value="X-ray"/>
    <property type="resolution" value="4.65 A"/>
    <property type="chains" value="C/D=27-169"/>
</dbReference>
<dbReference type="PDBsum" id="4BKF"/>
<dbReference type="SMR" id="Q15768"/>
<dbReference type="BioGRID" id="108269">
    <property type="interactions" value="143"/>
</dbReference>
<dbReference type="DIP" id="DIP-59196N"/>
<dbReference type="FunCoup" id="Q15768">
    <property type="interactions" value="776"/>
</dbReference>
<dbReference type="IntAct" id="Q15768">
    <property type="interactions" value="55"/>
</dbReference>
<dbReference type="MINT" id="Q15768"/>
<dbReference type="STRING" id="9606.ENSP00000226091"/>
<dbReference type="GlyCosmos" id="Q15768">
    <property type="glycosylation" value="1 site, No reported glycans"/>
</dbReference>
<dbReference type="GlyGen" id="Q15768">
    <property type="glycosylation" value="1 site, 1 N-linked glycan (1 site)"/>
</dbReference>
<dbReference type="iPTMnet" id="Q15768"/>
<dbReference type="PhosphoSitePlus" id="Q15768"/>
<dbReference type="SwissPalm" id="Q15768"/>
<dbReference type="BioMuta" id="EFNB3"/>
<dbReference type="DMDM" id="2494367"/>
<dbReference type="jPOST" id="Q15768"/>
<dbReference type="MassIVE" id="Q15768"/>
<dbReference type="PaxDb" id="9606-ENSP00000226091"/>
<dbReference type="PeptideAtlas" id="Q15768"/>
<dbReference type="ProteomicsDB" id="60749"/>
<dbReference type="Pumba" id="Q15768"/>
<dbReference type="Antibodypedia" id="644">
    <property type="antibodies" value="294 antibodies from 30 providers"/>
</dbReference>
<dbReference type="DNASU" id="1949"/>
<dbReference type="Ensembl" id="ENST00000226091.3">
    <property type="protein sequence ID" value="ENSP00000226091.2"/>
    <property type="gene ID" value="ENSG00000108947.5"/>
</dbReference>
<dbReference type="GeneID" id="1949"/>
<dbReference type="KEGG" id="hsa:1949"/>
<dbReference type="MANE-Select" id="ENST00000226091.3">
    <property type="protein sequence ID" value="ENSP00000226091.2"/>
    <property type="RefSeq nucleotide sequence ID" value="NM_001406.4"/>
    <property type="RefSeq protein sequence ID" value="NP_001397.1"/>
</dbReference>
<dbReference type="UCSC" id="uc002gis.4">
    <property type="organism name" value="human"/>
</dbReference>
<dbReference type="AGR" id="HGNC:3228"/>
<dbReference type="CTD" id="1949"/>
<dbReference type="DisGeNET" id="1949"/>
<dbReference type="GeneCards" id="EFNB3"/>
<dbReference type="HGNC" id="HGNC:3228">
    <property type="gene designation" value="EFNB3"/>
</dbReference>
<dbReference type="HPA" id="ENSG00000108947">
    <property type="expression patterns" value="Tissue enhanced (brain)"/>
</dbReference>
<dbReference type="MIM" id="602297">
    <property type="type" value="gene"/>
</dbReference>
<dbReference type="neXtProt" id="NX_Q15768"/>
<dbReference type="OpenTargets" id="ENSG00000108947"/>
<dbReference type="PharmGKB" id="PA27663"/>
<dbReference type="VEuPathDB" id="HostDB:ENSG00000108947"/>
<dbReference type="eggNOG" id="KOG3858">
    <property type="taxonomic scope" value="Eukaryota"/>
</dbReference>
<dbReference type="GeneTree" id="ENSGT00940000160323"/>
<dbReference type="HOGENOM" id="CLU_072080_0_0_1"/>
<dbReference type="InParanoid" id="Q15768"/>
<dbReference type="OMA" id="HNALSAC"/>
<dbReference type="OrthoDB" id="6250301at2759"/>
<dbReference type="PAN-GO" id="Q15768">
    <property type="GO annotations" value="4 GO annotations based on evolutionary models"/>
</dbReference>
<dbReference type="PhylomeDB" id="Q15768"/>
<dbReference type="PathwayCommons" id="Q15768"/>
<dbReference type="Reactome" id="R-HSA-2682334">
    <property type="pathway name" value="EPH-Ephrin signaling"/>
</dbReference>
<dbReference type="Reactome" id="R-HSA-3928662">
    <property type="pathway name" value="EPHB-mediated forward signaling"/>
</dbReference>
<dbReference type="Reactome" id="R-HSA-3928664">
    <property type="pathway name" value="Ephrin signaling"/>
</dbReference>
<dbReference type="Reactome" id="R-HSA-3928665">
    <property type="pathway name" value="EPH-ephrin mediated repulsion of cells"/>
</dbReference>
<dbReference type="SignaLink" id="Q15768"/>
<dbReference type="SIGNOR" id="Q15768"/>
<dbReference type="BioGRID-ORCS" id="1949">
    <property type="hits" value="14 hits in 1145 CRISPR screens"/>
</dbReference>
<dbReference type="ChiTaRS" id="EFNB3">
    <property type="organism name" value="human"/>
</dbReference>
<dbReference type="EvolutionaryTrace" id="Q15768"/>
<dbReference type="GeneWiki" id="EFNB3"/>
<dbReference type="GenomeRNAi" id="1949"/>
<dbReference type="Pharos" id="Q15768">
    <property type="development level" value="Tbio"/>
</dbReference>
<dbReference type="PRO" id="PR:Q15768"/>
<dbReference type="Proteomes" id="UP000005640">
    <property type="component" value="Chromosome 17"/>
</dbReference>
<dbReference type="RNAct" id="Q15768">
    <property type="molecule type" value="protein"/>
</dbReference>
<dbReference type="Bgee" id="ENSG00000108947">
    <property type="expression patterns" value="Expressed in middle temporal gyrus and 145 other cell types or tissues"/>
</dbReference>
<dbReference type="GO" id="GO:0098978">
    <property type="term" value="C:glutamatergic synapse"/>
    <property type="evidence" value="ECO:0000318"/>
    <property type="project" value="GO_Central"/>
</dbReference>
<dbReference type="GO" id="GO:0098686">
    <property type="term" value="C:hippocampal mossy fiber to CA3 synapse"/>
    <property type="evidence" value="ECO:0007669"/>
    <property type="project" value="Ensembl"/>
</dbReference>
<dbReference type="GO" id="GO:0005886">
    <property type="term" value="C:plasma membrane"/>
    <property type="evidence" value="ECO:0000314"/>
    <property type="project" value="CAFA"/>
</dbReference>
<dbReference type="GO" id="GO:0042734">
    <property type="term" value="C:presynaptic membrane"/>
    <property type="evidence" value="ECO:0000318"/>
    <property type="project" value="GO_Central"/>
</dbReference>
<dbReference type="GO" id="GO:0046875">
    <property type="term" value="F:ephrin receptor binding"/>
    <property type="evidence" value="ECO:0000314"/>
    <property type="project" value="MGI"/>
</dbReference>
<dbReference type="GO" id="GO:0005005">
    <property type="term" value="F:transmembrane-ephrin receptor activity"/>
    <property type="evidence" value="ECO:0000304"/>
    <property type="project" value="ProtInc"/>
</dbReference>
<dbReference type="GO" id="GO:0001618">
    <property type="term" value="F:virus receptor activity"/>
    <property type="evidence" value="ECO:0007669"/>
    <property type="project" value="UniProtKB-KW"/>
</dbReference>
<dbReference type="GO" id="GO:0007628">
    <property type="term" value="P:adult walking behavior"/>
    <property type="evidence" value="ECO:0007669"/>
    <property type="project" value="Ensembl"/>
</dbReference>
<dbReference type="GO" id="GO:0016198">
    <property type="term" value="P:axon choice point recognition"/>
    <property type="evidence" value="ECO:0007669"/>
    <property type="project" value="Ensembl"/>
</dbReference>
<dbReference type="GO" id="GO:0007411">
    <property type="term" value="P:axon guidance"/>
    <property type="evidence" value="ECO:0000318"/>
    <property type="project" value="GO_Central"/>
</dbReference>
<dbReference type="GO" id="GO:0007267">
    <property type="term" value="P:cell-cell signaling"/>
    <property type="evidence" value="ECO:0000304"/>
    <property type="project" value="ProtInc"/>
</dbReference>
<dbReference type="GO" id="GO:0048013">
    <property type="term" value="P:ephrin receptor signaling pathway"/>
    <property type="evidence" value="ECO:0000314"/>
    <property type="project" value="MGI"/>
</dbReference>
<dbReference type="GO" id="GO:0050771">
    <property type="term" value="P:negative regulation of axonogenesis"/>
    <property type="evidence" value="ECO:0000250"/>
    <property type="project" value="ARUK-UCL"/>
</dbReference>
<dbReference type="GO" id="GO:0007399">
    <property type="term" value="P:nervous system development"/>
    <property type="evidence" value="ECO:0000304"/>
    <property type="project" value="ProtInc"/>
</dbReference>
<dbReference type="GO" id="GO:0031295">
    <property type="term" value="P:T cell costimulation"/>
    <property type="evidence" value="ECO:0007669"/>
    <property type="project" value="Ensembl"/>
</dbReference>
<dbReference type="GO" id="GO:0099557">
    <property type="term" value="P:trans-synaptic signaling by trans-synaptic complex, modulating synaptic transmission"/>
    <property type="evidence" value="ECO:0007669"/>
    <property type="project" value="Ensembl"/>
</dbReference>
<dbReference type="FunFam" id="2.60.40.420:FF:000019">
    <property type="entry name" value="Putative ephrin-B3"/>
    <property type="match status" value="1"/>
</dbReference>
<dbReference type="Gene3D" id="2.60.40.420">
    <property type="entry name" value="Cupredoxins - blue copper proteins"/>
    <property type="match status" value="1"/>
</dbReference>
<dbReference type="InterPro" id="IPR008972">
    <property type="entry name" value="Cupredoxin"/>
</dbReference>
<dbReference type="InterPro" id="IPR031328">
    <property type="entry name" value="Ephrin"/>
</dbReference>
<dbReference type="InterPro" id="IPR019765">
    <property type="entry name" value="Ephrin_CS"/>
</dbReference>
<dbReference type="InterPro" id="IPR001799">
    <property type="entry name" value="Ephrin_RBD"/>
</dbReference>
<dbReference type="PANTHER" id="PTHR11304">
    <property type="entry name" value="EPHRIN"/>
    <property type="match status" value="1"/>
</dbReference>
<dbReference type="PANTHER" id="PTHR11304:SF34">
    <property type="entry name" value="EPHRIN-B3"/>
    <property type="match status" value="1"/>
</dbReference>
<dbReference type="Pfam" id="PF00812">
    <property type="entry name" value="Ephrin"/>
    <property type="match status" value="1"/>
</dbReference>
<dbReference type="PRINTS" id="PR01347">
    <property type="entry name" value="EPHRIN"/>
</dbReference>
<dbReference type="SUPFAM" id="SSF49503">
    <property type="entry name" value="Cupredoxins"/>
    <property type="match status" value="1"/>
</dbReference>
<dbReference type="PROSITE" id="PS01299">
    <property type="entry name" value="EPHRIN_RBD_1"/>
    <property type="match status" value="1"/>
</dbReference>
<dbReference type="PROSITE" id="PS51551">
    <property type="entry name" value="EPHRIN_RBD_2"/>
    <property type="match status" value="1"/>
</dbReference>